<proteinExistence type="evidence at protein level"/>
<gene>
    <name evidence="4" type="primary">atsK</name>
</gene>
<keyword id="KW-0002">3D-structure</keyword>
<keyword id="KW-0223">Dioxygenase</keyword>
<keyword id="KW-0408">Iron</keyword>
<keyword id="KW-0479">Metal-binding</keyword>
<keyword id="KW-0560">Oxidoreductase</keyword>
<organism>
    <name type="scientific">Pseudomonas putida</name>
    <name type="common">Arthrobacter siderocapsulatus</name>
    <dbReference type="NCBI Taxonomy" id="303"/>
    <lineage>
        <taxon>Bacteria</taxon>
        <taxon>Pseudomonadati</taxon>
        <taxon>Pseudomonadota</taxon>
        <taxon>Gammaproteobacteria</taxon>
        <taxon>Pseudomonadales</taxon>
        <taxon>Pseudomonadaceae</taxon>
        <taxon>Pseudomonas</taxon>
    </lineage>
</organism>
<feature type="chain" id="PRO_0000432470" description="Alpha-ketoglutarate-dependent sulfate ester dioxygenase">
    <location>
        <begin position="1"/>
        <end position="301"/>
    </location>
</feature>
<feature type="binding site" evidence="2">
    <location>
        <position position="81"/>
    </location>
    <ligand>
        <name>substrate</name>
    </ligand>
</feature>
<feature type="binding site" evidence="2 3">
    <location>
        <position position="108"/>
    </location>
    <ligand>
        <name>Fe cation</name>
        <dbReference type="ChEBI" id="CHEBI:24875"/>
    </ligand>
</feature>
<feature type="binding site" evidence="2 3">
    <location>
        <position position="110"/>
    </location>
    <ligand>
        <name>Fe cation</name>
        <dbReference type="ChEBI" id="CHEBI:24875"/>
    </ligand>
</feature>
<feature type="binding site" evidence="2">
    <location>
        <position position="111"/>
    </location>
    <ligand>
        <name>substrate</name>
    </ligand>
</feature>
<feature type="binding site" evidence="2 3">
    <location>
        <position position="135"/>
    </location>
    <ligand>
        <name>2-oxoglutarate</name>
        <dbReference type="ChEBI" id="CHEBI:16810"/>
    </ligand>
</feature>
<feature type="binding site" evidence="2 3">
    <location>
        <position position="264"/>
    </location>
    <ligand>
        <name>Fe cation</name>
        <dbReference type="ChEBI" id="CHEBI:24875"/>
    </ligand>
</feature>
<feature type="binding site" evidence="2 3">
    <location>
        <position position="275"/>
    </location>
    <ligand>
        <name>2-oxoglutarate</name>
        <dbReference type="ChEBI" id="CHEBI:16810"/>
    </ligand>
</feature>
<feature type="binding site" evidence="2 3">
    <location>
        <position position="279"/>
    </location>
    <ligand>
        <name>2-oxoglutarate</name>
        <dbReference type="ChEBI" id="CHEBI:16810"/>
    </ligand>
</feature>
<feature type="strand" evidence="6">
    <location>
        <begin position="16"/>
        <end position="24"/>
    </location>
</feature>
<feature type="strand" evidence="6">
    <location>
        <begin position="26"/>
        <end position="30"/>
    </location>
</feature>
<feature type="helix" evidence="6">
    <location>
        <begin position="39"/>
        <end position="52"/>
    </location>
</feature>
<feature type="strand" evidence="6">
    <location>
        <begin position="53"/>
        <end position="57"/>
    </location>
</feature>
<feature type="helix" evidence="6">
    <location>
        <begin position="65"/>
        <end position="73"/>
    </location>
</feature>
<feature type="strand" evidence="7">
    <location>
        <begin position="78"/>
        <end position="81"/>
    </location>
</feature>
<feature type="strand" evidence="6">
    <location>
        <begin position="94"/>
        <end position="96"/>
    </location>
</feature>
<feature type="turn" evidence="6">
    <location>
        <begin position="110"/>
        <end position="113"/>
    </location>
</feature>
<feature type="strand" evidence="6">
    <location>
        <begin position="114"/>
        <end position="116"/>
    </location>
</feature>
<feature type="strand" evidence="6">
    <location>
        <begin position="119"/>
        <end position="127"/>
    </location>
</feature>
<feature type="strand" evidence="6">
    <location>
        <begin position="135"/>
        <end position="139"/>
    </location>
</feature>
<feature type="helix" evidence="6">
    <location>
        <begin position="140"/>
        <end position="145"/>
    </location>
</feature>
<feature type="helix" evidence="6">
    <location>
        <begin position="149"/>
        <end position="157"/>
    </location>
</feature>
<feature type="strand" evidence="6">
    <location>
        <begin position="159"/>
        <end position="163"/>
    </location>
</feature>
<feature type="strand" evidence="6">
    <location>
        <begin position="193"/>
        <end position="201"/>
    </location>
</feature>
<feature type="turn" evidence="6">
    <location>
        <begin position="203"/>
        <end position="205"/>
    </location>
</feature>
<feature type="strand" evidence="6">
    <location>
        <begin position="208"/>
        <end position="210"/>
    </location>
</feature>
<feature type="strand" evidence="6">
    <location>
        <begin position="216"/>
        <end position="219"/>
    </location>
</feature>
<feature type="helix" evidence="6">
    <location>
        <begin position="224"/>
        <end position="238"/>
    </location>
</feature>
<feature type="helix" evidence="6">
    <location>
        <begin position="241"/>
        <end position="243"/>
    </location>
</feature>
<feature type="strand" evidence="6">
    <location>
        <begin position="244"/>
        <end position="247"/>
    </location>
</feature>
<feature type="strand" evidence="6">
    <location>
        <begin position="254"/>
        <end position="258"/>
    </location>
</feature>
<feature type="strand" evidence="6">
    <location>
        <begin position="261"/>
        <end position="266"/>
    </location>
</feature>
<feature type="strand" evidence="6">
    <location>
        <begin position="276"/>
        <end position="282"/>
    </location>
</feature>
<feature type="strand" evidence="6">
    <location>
        <begin position="296"/>
        <end position="299"/>
    </location>
</feature>
<protein>
    <recommendedName>
        <fullName evidence="4">Alpha-ketoglutarate-dependent sulfate ester dioxygenase</fullName>
        <ecNumber evidence="1">1.14.11.77</ecNumber>
    </recommendedName>
    <alternativeName>
        <fullName evidence="4">Alkylsulfatase</fullName>
    </alternativeName>
    <alternativeName>
        <fullName evidence="4">Type II alkyl sulfatase</fullName>
    </alternativeName>
</protein>
<comment type="function">
    <text evidence="1">Catalyzes the oxygenolytic cleavage of 2-ethylhexyl sulfate (2-EHS) in the presence of alpha-ketoglutarate to yield 2-ethyl-hexanal and succinate, the decarboxylated form of alpha-ketoglutarate. It can accept a wide range of alpha-keto acids including 2-oxo-valerate, 2-oxo-adipate, 2-oxo-octanoate, 3-methyl-2-oxo-butyrate, oxaloacetate-alpha-ketoadipate, and alpha-ketooctanoate. It can catalyze the cleavage of medium-chain alkyl sulfate esters such as butylsulfate, pentylsulfate, hexylsulfate, heptylsulfate, octylsulfate, nonylsulfate, decylsulfate and sodium dodecyl sulfate (SDS).</text>
</comment>
<comment type="catalytic activity">
    <reaction evidence="1">
        <text>a primary linear alkyl sulfate ester + 2-oxoglutarate + O2 = an aldehyde + sulfate + succinate + CO2 + H(+)</text>
        <dbReference type="Rhea" id="RHEA:65716"/>
        <dbReference type="ChEBI" id="CHEBI:15378"/>
        <dbReference type="ChEBI" id="CHEBI:15379"/>
        <dbReference type="ChEBI" id="CHEBI:16189"/>
        <dbReference type="ChEBI" id="CHEBI:16526"/>
        <dbReference type="ChEBI" id="CHEBI:16810"/>
        <dbReference type="ChEBI" id="CHEBI:17478"/>
        <dbReference type="ChEBI" id="CHEBI:30031"/>
        <dbReference type="ChEBI" id="CHEBI:157685"/>
        <dbReference type="EC" id="1.14.11.77"/>
    </reaction>
</comment>
<comment type="catalytic activity">
    <reaction evidence="1">
        <text>2-ethylhexyl sulfate + 2-oxoglutarate + O2 = 2-ethylhexanal + sulfate + succinate + CO2 + H(+)</text>
        <dbReference type="Rhea" id="RHEA:47620"/>
        <dbReference type="ChEBI" id="CHEBI:15378"/>
        <dbReference type="ChEBI" id="CHEBI:15379"/>
        <dbReference type="ChEBI" id="CHEBI:16189"/>
        <dbReference type="ChEBI" id="CHEBI:16526"/>
        <dbReference type="ChEBI" id="CHEBI:16810"/>
        <dbReference type="ChEBI" id="CHEBI:30031"/>
        <dbReference type="ChEBI" id="CHEBI:87808"/>
        <dbReference type="ChEBI" id="CHEBI:87809"/>
        <dbReference type="EC" id="1.14.11.77"/>
    </reaction>
</comment>
<comment type="catalytic activity">
    <reaction evidence="1">
        <text>decyl sulfate + 2-oxoglutarate + O2 = decanal + sulfate + succinate + CO2 + H(+)</text>
        <dbReference type="Rhea" id="RHEA:65744"/>
        <dbReference type="ChEBI" id="CHEBI:15378"/>
        <dbReference type="ChEBI" id="CHEBI:15379"/>
        <dbReference type="ChEBI" id="CHEBI:16189"/>
        <dbReference type="ChEBI" id="CHEBI:16526"/>
        <dbReference type="ChEBI" id="CHEBI:16810"/>
        <dbReference type="ChEBI" id="CHEBI:30031"/>
        <dbReference type="ChEBI" id="CHEBI:31457"/>
        <dbReference type="ChEBI" id="CHEBI:83020"/>
        <dbReference type="EC" id="1.14.11.77"/>
    </reaction>
</comment>
<comment type="catalytic activity">
    <reaction evidence="1">
        <text>hexyl sulfate + 2-oxoglutarate + O2 = hexanal + sulfate + succinate + CO2 + H(+)</text>
        <dbReference type="Rhea" id="RHEA:65728"/>
        <dbReference type="ChEBI" id="CHEBI:15378"/>
        <dbReference type="ChEBI" id="CHEBI:15379"/>
        <dbReference type="ChEBI" id="CHEBI:16189"/>
        <dbReference type="ChEBI" id="CHEBI:16526"/>
        <dbReference type="ChEBI" id="CHEBI:16810"/>
        <dbReference type="ChEBI" id="CHEBI:30031"/>
        <dbReference type="ChEBI" id="CHEBI:88528"/>
        <dbReference type="ChEBI" id="CHEBI:157688"/>
        <dbReference type="EC" id="1.14.11.77"/>
    </reaction>
</comment>
<comment type="catalytic activity">
    <reaction evidence="1">
        <text>nonyl sufate + 2-oxoglutarate + O2 = nonanal + sulfate + succinate + CO2 + H(+)</text>
        <dbReference type="Rhea" id="RHEA:65740"/>
        <dbReference type="ChEBI" id="CHEBI:15378"/>
        <dbReference type="ChEBI" id="CHEBI:15379"/>
        <dbReference type="ChEBI" id="CHEBI:16189"/>
        <dbReference type="ChEBI" id="CHEBI:16526"/>
        <dbReference type="ChEBI" id="CHEBI:16810"/>
        <dbReference type="ChEBI" id="CHEBI:30031"/>
        <dbReference type="ChEBI" id="CHEBI:84268"/>
        <dbReference type="ChEBI" id="CHEBI:157690"/>
        <dbReference type="EC" id="1.14.11.77"/>
    </reaction>
</comment>
<comment type="cofactor">
    <cofactor evidence="1 2 3">
        <name>Fe(2+)</name>
        <dbReference type="ChEBI" id="CHEBI:29033"/>
    </cofactor>
</comment>
<comment type="activity regulation">
    <text evidence="1">Strongly stimulated by ascorbate.</text>
</comment>
<comment type="biophysicochemical properties">
    <kinetics>
        <KM evidence="1">34 mM for SDS (at pH 7 and 30 degrees Celsius)</KM>
        <KM evidence="1">40 mM for hexylsulfate (at pH 7 and 30 degrees Celsius)</KM>
        <KM evidence="1">60 mM for nonylsulfate (at pH 7 and 30 degrees Celsius)</KM>
        <KM evidence="1">66 mM for 2-EHS (at pH 7 and 30 degrees Celsius)</KM>
        <KM evidence="1">97 mM for decylsulfate (at pH 7 and 30 degrees Celsius)</KM>
        <KM evidence="1">140 mM for alpha-ketoglutarate (at pH 7 and 30 degrees Celsius)</KM>
        <KM evidence="1">271 mM for heptylsulfate (at pH 7 and 30 degrees Celsius)</KM>
        <KM evidence="1">437 mM for octylsulfate (at pH 7 and 30 degrees Celsius)</KM>
    </kinetics>
    <phDependence>
        <text evidence="1">Optimum pH is 7.</text>
    </phDependence>
</comment>
<comment type="subunit">
    <text evidence="1 2 3">Homotetramer.</text>
</comment>
<comment type="similarity">
    <text evidence="5">Belongs to the TfdA dioxygenase family.</text>
</comment>
<sequence length="301" mass="33201">MSNAALATAPHALELDVHPVAGRIGAEIRGVKLSPDLDAATVEAIQAALVRHKVIFFRGQTHLDDQSQEGFAKLLGEPVAHPTVPVVDGTRYLLQLDGAQGQRANSWHTDVTFVEAYPKASILRSVVAPASGGDTVWANTAAAYQELPEPLRELADKLWAVHSNEYDYASLKPDIDPAKLERHRKVFTSTVYETEHPVVRVHPISGERALQLGHFVKRIKGYSLADSQHLFAVLQGHVTRLENTVRWRWEAGDVAIWDNRATQHYAVDDYGTQPRIVRRVTLAGEVPVGVDGQLSRTTRKG</sequence>
<accession>Q9WWU5</accession>
<dbReference type="EC" id="1.14.11.77" evidence="1"/>
<dbReference type="EMBL" id="AF126201">
    <property type="protein sequence ID" value="AAD31784.1"/>
    <property type="molecule type" value="Genomic_DNA"/>
</dbReference>
<dbReference type="PDB" id="1OIH">
    <property type="method" value="X-ray"/>
    <property type="resolution" value="1.89 A"/>
    <property type="chains" value="A/B/C/D=1-301"/>
</dbReference>
<dbReference type="PDB" id="1OII">
    <property type="method" value="X-ray"/>
    <property type="resolution" value="2.19 A"/>
    <property type="chains" value="A/B/C/D=1-301"/>
</dbReference>
<dbReference type="PDB" id="1OIJ">
    <property type="method" value="X-ray"/>
    <property type="resolution" value="2.10 A"/>
    <property type="chains" value="A/B/C/D=1-301"/>
</dbReference>
<dbReference type="PDB" id="1OIK">
    <property type="method" value="X-ray"/>
    <property type="resolution" value="2.06 A"/>
    <property type="chains" value="A/D=1-301"/>
</dbReference>
<dbReference type="PDB" id="1VZ4">
    <property type="method" value="X-ray"/>
    <property type="resolution" value="2.50 A"/>
    <property type="chains" value="A/D=1-301"/>
</dbReference>
<dbReference type="PDB" id="1VZ5">
    <property type="method" value="X-ray"/>
    <property type="resolution" value="2.15 A"/>
    <property type="chains" value="A/B/C/D=1-301"/>
</dbReference>
<dbReference type="PDBsum" id="1OIH"/>
<dbReference type="PDBsum" id="1OII"/>
<dbReference type="PDBsum" id="1OIJ"/>
<dbReference type="PDBsum" id="1OIK"/>
<dbReference type="PDBsum" id="1VZ4"/>
<dbReference type="PDBsum" id="1VZ5"/>
<dbReference type="SMR" id="Q9WWU5"/>
<dbReference type="DrugBank" id="DB07518">
    <property type="generic name" value="(2R)-2-ETHYL-1-HEXANESULFONIC ACID"/>
</dbReference>
<dbReference type="BioCyc" id="MetaCyc:MONOMER-20686"/>
<dbReference type="BRENDA" id="1.14.11.77">
    <property type="organism ID" value="5092"/>
</dbReference>
<dbReference type="EvolutionaryTrace" id="Q9WWU5"/>
<dbReference type="GO" id="GO:0005737">
    <property type="term" value="C:cytoplasm"/>
    <property type="evidence" value="ECO:0007669"/>
    <property type="project" value="TreeGrafter"/>
</dbReference>
<dbReference type="GO" id="GO:0016706">
    <property type="term" value="F:2-oxoglutarate-dependent dioxygenase activity"/>
    <property type="evidence" value="ECO:0007669"/>
    <property type="project" value="TreeGrafter"/>
</dbReference>
<dbReference type="GO" id="GO:0046872">
    <property type="term" value="F:metal ion binding"/>
    <property type="evidence" value="ECO:0007669"/>
    <property type="project" value="UniProtKB-KW"/>
</dbReference>
<dbReference type="FunFam" id="3.60.130.10:FF:000002">
    <property type="entry name" value="Alpha-ketoglutarate-dependent taurine dioxygenase"/>
    <property type="match status" value="1"/>
</dbReference>
<dbReference type="Gene3D" id="3.60.130.10">
    <property type="entry name" value="Clavaminate synthase-like"/>
    <property type="match status" value="1"/>
</dbReference>
<dbReference type="InterPro" id="IPR051323">
    <property type="entry name" value="AtsK-like"/>
</dbReference>
<dbReference type="InterPro" id="IPR042098">
    <property type="entry name" value="TauD-like_sf"/>
</dbReference>
<dbReference type="InterPro" id="IPR003819">
    <property type="entry name" value="TauD/TfdA-like"/>
</dbReference>
<dbReference type="PANTHER" id="PTHR30468:SF5">
    <property type="entry name" value="ALPHA-KETOGLUTARATE-DEPENDENT SULFATE ESTER DIOXYGENASE"/>
    <property type="match status" value="1"/>
</dbReference>
<dbReference type="PANTHER" id="PTHR30468">
    <property type="entry name" value="ALPHA-KETOGLUTARATE-DEPENDENT SULFONATE DIOXYGENASE"/>
    <property type="match status" value="1"/>
</dbReference>
<dbReference type="Pfam" id="PF02668">
    <property type="entry name" value="TauD"/>
    <property type="match status" value="1"/>
</dbReference>
<dbReference type="SUPFAM" id="SSF51197">
    <property type="entry name" value="Clavaminate synthase-like"/>
    <property type="match status" value="1"/>
</dbReference>
<evidence type="ECO:0000269" key="1">
    <source>
    </source>
</evidence>
<evidence type="ECO:0000269" key="2">
    <source>
    </source>
</evidence>
<evidence type="ECO:0000269" key="3">
    <source>
    </source>
</evidence>
<evidence type="ECO:0000303" key="4">
    <source>
    </source>
</evidence>
<evidence type="ECO:0000305" key="5"/>
<evidence type="ECO:0007829" key="6">
    <source>
        <dbReference type="PDB" id="1OIH"/>
    </source>
</evidence>
<evidence type="ECO:0007829" key="7">
    <source>
        <dbReference type="PDB" id="1VZ4"/>
    </source>
</evidence>
<reference key="1">
    <citation type="submission" date="1999-10" db="EMBL/GenBank/DDBJ databases">
        <authorList>
            <person name="Vermeij P."/>
            <person name="Kahnert A."/>
            <person name="Kertesz M.A."/>
        </authorList>
    </citation>
    <scope>NUCLEOTIDE SEQUENCE [GENOMIC DNA]</scope>
    <source>
        <strain>DSM 6884 / S-313</strain>
    </source>
</reference>
<reference key="2">
    <citation type="journal article" date="2000" name="J. Biol. Chem.">
        <title>Characterization of a sulfur-regulated oxygenative alkylsulfatase from Pseudomonas putida S-313.</title>
        <authorList>
            <person name="Kahnert A."/>
            <person name="Kertesz M.A."/>
        </authorList>
    </citation>
    <scope>NUCLEOTIDE SEQUENCE [GENOMIC DNA]</scope>
    <scope>FUNCTION</scope>
    <scope>CATALYTIC ACTIVITY</scope>
    <scope>BIOPHYSICOCHEMICAL PROPERTIES</scope>
    <scope>ACTIVITY REGULATION</scope>
    <scope>COFACTOR</scope>
    <scope>SUBUNIT</scope>
    <scope>SUBSTRATE SPECIFICITY</scope>
    <source>
        <strain>DSM 6884 / S-313</strain>
    </source>
</reference>
<reference key="3">
    <citation type="journal article" date="2004" name="Biochemistry">
        <title>Crystal structure of the alkylsulfatase AtsK: insights into the catalytic mechanism of the Fe(II) alpha-ketoglutarate-dependent dioxygenase superfamily.</title>
        <authorList>
            <person name="Muller I."/>
            <person name="Kahnert A."/>
            <person name="Pape T."/>
            <person name="Sheldrick G.M."/>
            <person name="Meyer-Klaucke W."/>
            <person name="Dierks T."/>
            <person name="Kertesz M."/>
            <person name="Uson I."/>
        </authorList>
    </citation>
    <scope>X-RAY CRYSTALLOGRAPHY (1.89 ANGSTROMS) IN COMPLEX WITH IRON AND SUBSTRATE ANALOGS</scope>
    <scope>COFACTOR</scope>
    <scope>SUBUNIT</scope>
    <scope>REACTION MECHANISM</scope>
    <source>
        <strain>DSM 6884 / S-313</strain>
    </source>
</reference>
<reference key="4">
    <citation type="journal article" date="2005" name="J. Biol. Chem.">
        <title>Succinate complex crystal structures of the alpha-ketoglutarate-dependent dioxygenase AtsK: steric aspects of enzyme self-hydroxylation.</title>
        <authorList>
            <person name="Muller I."/>
            <person name="Stuckl C."/>
            <person name="Wakeley J."/>
            <person name="Kertesz M."/>
            <person name="Uson I."/>
        </authorList>
    </citation>
    <scope>X-RAY CRYSTALLOGRAPHY (2.15 ANGSTROMS) IN COMPLEX WITH IRON AND SUBSTRATE ANALOGS</scope>
    <scope>COFACTOR</scope>
    <scope>SUBUNIT</scope>
    <source>
        <strain>DSM 6884 / S-313</strain>
    </source>
</reference>
<name>ATSK_PSEPU</name>